<evidence type="ECO:0000305" key="1"/>
<sequence length="616" mass="65041">MTVLPDDGLSLAAEFPDATHEQWHRLVEGVVRKSGKDVSGTAAEEALSTTLEDGLTTRPLYTARDAAPDAGFPGFAPFVRGSVPEGNTPGGWDVRQRYASADPARTNEAVLTDLENGVTSLWLTLGSAGLPVTGLERALDGVYLDLVPVALDAGSEAATAARELLRLYEAAGVADDAVRGTLGADPLGHEARTGEKSTSFAAVAELARLCGERYPGLRALTVDALPYHEAGASAAQELGASLATGVEYLRALHDKGLGVEKAFAQLEFRFAATADQFLTIAKLRAARRLWARVAEVSGVPAAGAQRQHAVTSPVMMTRRDPWVNMLRTTVACLGAGVGGADAVTVLPFDHELGLPDAFARRIARNTSTILLEESHLARVIDPAGGSWYVERLTDELAHAAWDFFKEIERADGQVAALRSGLVGDRIAATWAERRKKLARRREPITGVSEFPLLTERPVEREPAPAAPPGGLPRVRRDEAYEELRGRSDAHLEATGARPKVFIAALGPAAAHTARATFAANLFMAGGVEPVHDPVSVDAETAAEAFAASGATVACLCSSDVLYAEQAEAVARALKSAGALRVFLAGRGEFADIDEYVFAGCDAVAVLTSTLDRMGVA</sequence>
<keyword id="KW-0846">Cobalamin</keyword>
<keyword id="KW-0170">Cobalt</keyword>
<keyword id="KW-0413">Isomerase</keyword>
<organism>
    <name type="scientific">Streptomyces virginiae</name>
    <name type="common">Streptomyces cinnamonensis</name>
    <dbReference type="NCBI Taxonomy" id="1961"/>
    <lineage>
        <taxon>Bacteria</taxon>
        <taxon>Bacillati</taxon>
        <taxon>Actinomycetota</taxon>
        <taxon>Actinomycetes</taxon>
        <taxon>Kitasatosporales</taxon>
        <taxon>Streptomycetaceae</taxon>
        <taxon>Streptomyces</taxon>
    </lineage>
</organism>
<reference key="1">
    <citation type="journal article" date="1993" name="J. Bacteriol.">
        <title>Cloning, sequencing, and expression of the gene encoding methylmalonyl-coenzyme A mutase from Streptomyces cinnamonensis.</title>
        <authorList>
            <person name="Birch A."/>
            <person name="Leiser A."/>
            <person name="Robinson J.A."/>
        </authorList>
    </citation>
    <scope>NUCLEOTIDE SEQUENCE [GENOMIC DNA]</scope>
    <source>
        <strain>A3823.5</strain>
    </source>
</reference>
<protein>
    <recommendedName>
        <fullName>Methylmalonyl-CoA mutase small subunit</fullName>
        <ecNumber>5.4.99.2</ecNumber>
    </recommendedName>
    <alternativeName>
        <fullName>MCM-beta</fullName>
    </alternativeName>
</protein>
<name>MUTA_STRVG</name>
<dbReference type="EC" id="5.4.99.2"/>
<dbReference type="EMBL" id="L10064">
    <property type="protein sequence ID" value="AAA03040.1"/>
    <property type="molecule type" value="Unassigned_DNA"/>
</dbReference>
<dbReference type="PIR" id="A40595">
    <property type="entry name" value="A40595"/>
</dbReference>
<dbReference type="SMR" id="Q05064"/>
<dbReference type="UniPathway" id="UPA00945">
    <property type="reaction ID" value="UER00910"/>
</dbReference>
<dbReference type="GO" id="GO:0005737">
    <property type="term" value="C:cytoplasm"/>
    <property type="evidence" value="ECO:0007669"/>
    <property type="project" value="TreeGrafter"/>
</dbReference>
<dbReference type="GO" id="GO:0031419">
    <property type="term" value="F:cobalamin binding"/>
    <property type="evidence" value="ECO:0007669"/>
    <property type="project" value="UniProtKB-KW"/>
</dbReference>
<dbReference type="GO" id="GO:0004494">
    <property type="term" value="F:methylmalonyl-CoA mutase activity"/>
    <property type="evidence" value="ECO:0007669"/>
    <property type="project" value="UniProtKB-EC"/>
</dbReference>
<dbReference type="GO" id="GO:0019652">
    <property type="term" value="P:lactate fermentation to propionate and acetate"/>
    <property type="evidence" value="ECO:0007669"/>
    <property type="project" value="InterPro"/>
</dbReference>
<dbReference type="GO" id="GO:0019678">
    <property type="term" value="P:propionate metabolic process, methylmalonyl pathway"/>
    <property type="evidence" value="ECO:0007669"/>
    <property type="project" value="TreeGrafter"/>
</dbReference>
<dbReference type="CDD" id="cd03677">
    <property type="entry name" value="MM_CoA_mutase_beta"/>
    <property type="match status" value="1"/>
</dbReference>
<dbReference type="Gene3D" id="1.10.196.20">
    <property type="match status" value="1"/>
</dbReference>
<dbReference type="Gene3D" id="3.40.50.280">
    <property type="entry name" value="Cobalamin-binding domain"/>
    <property type="match status" value="1"/>
</dbReference>
<dbReference type="Gene3D" id="3.20.20.240">
    <property type="entry name" value="Methylmalonyl-CoA mutase"/>
    <property type="match status" value="1"/>
</dbReference>
<dbReference type="InterPro" id="IPR016176">
    <property type="entry name" value="Cbl-dep_enz_cat"/>
</dbReference>
<dbReference type="InterPro" id="IPR024067">
    <property type="entry name" value="Me-malonyl-CoA_mutase_sm_su_N"/>
</dbReference>
<dbReference type="InterPro" id="IPR006099">
    <property type="entry name" value="MeMalonylCoA_mutase_a/b_cat"/>
</dbReference>
<dbReference type="InterPro" id="IPR004608">
    <property type="entry name" value="MMCoA_mutase_b"/>
</dbReference>
<dbReference type="NCBIfam" id="TIGR00642">
    <property type="entry name" value="mmCoA_mut_beta"/>
    <property type="match status" value="1"/>
</dbReference>
<dbReference type="PANTHER" id="PTHR48101:SF4">
    <property type="entry name" value="METHYLMALONYL-COA MUTASE, MITOCHONDRIAL"/>
    <property type="match status" value="1"/>
</dbReference>
<dbReference type="PANTHER" id="PTHR48101">
    <property type="entry name" value="METHYLMALONYL-COA MUTASE, MITOCHONDRIAL-RELATED"/>
    <property type="match status" value="1"/>
</dbReference>
<dbReference type="Pfam" id="PF01642">
    <property type="entry name" value="MM_CoA_mutase"/>
    <property type="match status" value="1"/>
</dbReference>
<dbReference type="SUPFAM" id="SSF51703">
    <property type="entry name" value="Cobalamin (vitamin B12)-dependent enzymes"/>
    <property type="match status" value="1"/>
</dbReference>
<dbReference type="PROSITE" id="PS00544">
    <property type="entry name" value="METMALONYL_COA_MUTASE"/>
    <property type="match status" value="1"/>
</dbReference>
<proteinExistence type="inferred from homology"/>
<gene>
    <name type="primary">mutA</name>
</gene>
<comment type="function">
    <text>Catalyzes the isomerization of succinyl-CoA to methylmalonyl-CoA during synthesis of propionate from tricarboxylic acid-cycle intermediates. This conversion most likely represents an important source of building blocks for polyketide antibiotic biosynthesis. It is unable to catalyze the conversion of isobutyryl-CoA into N-butyryl-CoA.</text>
</comment>
<comment type="catalytic activity">
    <reaction>
        <text>(R)-methylmalonyl-CoA = succinyl-CoA</text>
        <dbReference type="Rhea" id="RHEA:22888"/>
        <dbReference type="ChEBI" id="CHEBI:57292"/>
        <dbReference type="ChEBI" id="CHEBI:57326"/>
        <dbReference type="EC" id="5.4.99.2"/>
    </reaction>
</comment>
<comment type="cofactor">
    <cofactor>
        <name>adenosylcob(III)alamin</name>
        <dbReference type="ChEBI" id="CHEBI:18408"/>
    </cofactor>
</comment>
<comment type="pathway">
    <text>Metabolic intermediate metabolism; propanoyl-CoA degradation; succinyl-CoA from propanoyl-CoA: step 3/3.</text>
</comment>
<comment type="subunit">
    <text>Heterodimer of an alpha and a beta chain.</text>
</comment>
<comment type="similarity">
    <text evidence="1">Belongs to the methylmalonyl-CoA mutase family.</text>
</comment>
<feature type="chain" id="PRO_0000194269" description="Methylmalonyl-CoA mutase small subunit">
    <location>
        <begin position="1"/>
        <end position="616"/>
    </location>
</feature>
<accession>Q05064</accession>